<comment type="function">
    <text evidence="1">PPIases accelerate the folding of proteins. It catalyzes the cis-trans isomerization of proline imidic peptide bonds in oligopeptides (By similarity).</text>
</comment>
<comment type="catalytic activity">
    <reaction>
        <text>[protein]-peptidylproline (omega=180) = [protein]-peptidylproline (omega=0)</text>
        <dbReference type="Rhea" id="RHEA:16237"/>
        <dbReference type="Rhea" id="RHEA-COMP:10747"/>
        <dbReference type="Rhea" id="RHEA-COMP:10748"/>
        <dbReference type="ChEBI" id="CHEBI:83833"/>
        <dbReference type="ChEBI" id="CHEBI:83834"/>
        <dbReference type="EC" id="5.2.1.8"/>
    </reaction>
</comment>
<comment type="similarity">
    <text evidence="3">Belongs to the cyclophilin-type PPIase family. PPIL1 subfamily.</text>
</comment>
<comment type="sequence caution" evidence="3">
    <conflict type="erroneous initiation">
        <sequence resource="EMBL-CDS" id="CAE76616"/>
    </conflict>
</comment>
<feature type="chain" id="PRO_0000232967" description="Peptidyl-prolyl cis-trans isomerase-like 1">
    <location>
        <begin position="1"/>
        <end position="163"/>
    </location>
</feature>
<feature type="domain" description="PPIase cyclophilin-type" evidence="2">
    <location>
        <begin position="1"/>
        <end position="155"/>
    </location>
</feature>
<protein>
    <recommendedName>
        <fullName>Peptidyl-prolyl cis-trans isomerase-like 1</fullName>
        <shortName>PPIase</shortName>
        <ecNumber>5.2.1.8</ecNumber>
    </recommendedName>
    <alternativeName>
        <fullName>Rotamase</fullName>
    </alternativeName>
</protein>
<gene>
    <name type="primary">ppi-1</name>
    <name type="synonym">cyp1</name>
    <name type="ORF">B22I21.300</name>
    <name type="ORF">NCU00578</name>
</gene>
<evidence type="ECO:0000250" key="1"/>
<evidence type="ECO:0000255" key="2">
    <source>
        <dbReference type="PROSITE-ProRule" id="PRU00156"/>
    </source>
</evidence>
<evidence type="ECO:0000305" key="3"/>
<accession>Q7SF72</accession>
<name>PPIL1_NEUCR</name>
<dbReference type="EC" id="5.2.1.8"/>
<dbReference type="EMBL" id="BX842641">
    <property type="protein sequence ID" value="CAE76616.1"/>
    <property type="status" value="ALT_INIT"/>
    <property type="molecule type" value="Genomic_DNA"/>
</dbReference>
<dbReference type="EMBL" id="CM002236">
    <property type="protein sequence ID" value="EAA35503.2"/>
    <property type="molecule type" value="Genomic_DNA"/>
</dbReference>
<dbReference type="RefSeq" id="XP_964739.2">
    <property type="nucleotide sequence ID" value="XM_959646.3"/>
</dbReference>
<dbReference type="SMR" id="Q7SF72"/>
<dbReference type="STRING" id="367110.Q7SF72"/>
<dbReference type="PaxDb" id="5141-EFNCRP00000000762"/>
<dbReference type="EnsemblFungi" id="EAA35503">
    <property type="protein sequence ID" value="EAA35503"/>
    <property type="gene ID" value="NCU00578"/>
</dbReference>
<dbReference type="GeneID" id="3880888"/>
<dbReference type="KEGG" id="ncr:NCU00578"/>
<dbReference type="VEuPathDB" id="FungiDB:NCU00578"/>
<dbReference type="HOGENOM" id="CLU_012062_16_3_1"/>
<dbReference type="InParanoid" id="Q7SF72"/>
<dbReference type="OrthoDB" id="271386at2759"/>
<dbReference type="Proteomes" id="UP000001805">
    <property type="component" value="Chromosome 1, Linkage Group I"/>
</dbReference>
<dbReference type="GO" id="GO:0071013">
    <property type="term" value="C:catalytic step 2 spliceosome"/>
    <property type="evidence" value="ECO:0000318"/>
    <property type="project" value="GO_Central"/>
</dbReference>
<dbReference type="GO" id="GO:0003755">
    <property type="term" value="F:peptidyl-prolyl cis-trans isomerase activity"/>
    <property type="evidence" value="ECO:0000318"/>
    <property type="project" value="GO_Central"/>
</dbReference>
<dbReference type="GO" id="GO:0000398">
    <property type="term" value="P:mRNA splicing, via spliceosome"/>
    <property type="evidence" value="ECO:0000318"/>
    <property type="project" value="GO_Central"/>
</dbReference>
<dbReference type="GO" id="GO:0006457">
    <property type="term" value="P:protein folding"/>
    <property type="evidence" value="ECO:0000318"/>
    <property type="project" value="GO_Central"/>
</dbReference>
<dbReference type="FunFam" id="2.40.100.10:FF:000008">
    <property type="entry name" value="Peptidyl-prolyl cis-trans isomerase"/>
    <property type="match status" value="1"/>
</dbReference>
<dbReference type="Gene3D" id="2.40.100.10">
    <property type="entry name" value="Cyclophilin-like"/>
    <property type="match status" value="1"/>
</dbReference>
<dbReference type="InterPro" id="IPR029000">
    <property type="entry name" value="Cyclophilin-like_dom_sf"/>
</dbReference>
<dbReference type="InterPro" id="IPR024936">
    <property type="entry name" value="Cyclophilin-type_PPIase"/>
</dbReference>
<dbReference type="InterPro" id="IPR020892">
    <property type="entry name" value="Cyclophilin-type_PPIase_CS"/>
</dbReference>
<dbReference type="InterPro" id="IPR002130">
    <property type="entry name" value="Cyclophilin-type_PPIase_dom"/>
</dbReference>
<dbReference type="InterPro" id="IPR044666">
    <property type="entry name" value="Cyclophilin_A-like"/>
</dbReference>
<dbReference type="PANTHER" id="PTHR45625">
    <property type="entry name" value="PEPTIDYL-PROLYL CIS-TRANS ISOMERASE-RELATED"/>
    <property type="match status" value="1"/>
</dbReference>
<dbReference type="PANTHER" id="PTHR45625:SF4">
    <property type="entry name" value="PEPTIDYLPROLYL ISOMERASE DOMAIN AND WD REPEAT-CONTAINING PROTEIN 1"/>
    <property type="match status" value="1"/>
</dbReference>
<dbReference type="Pfam" id="PF00160">
    <property type="entry name" value="Pro_isomerase"/>
    <property type="match status" value="1"/>
</dbReference>
<dbReference type="PIRSF" id="PIRSF001467">
    <property type="entry name" value="Peptidylpro_ismrse"/>
    <property type="match status" value="1"/>
</dbReference>
<dbReference type="PRINTS" id="PR00153">
    <property type="entry name" value="CSAPPISMRASE"/>
</dbReference>
<dbReference type="SUPFAM" id="SSF50891">
    <property type="entry name" value="Cyclophilin-like"/>
    <property type="match status" value="1"/>
</dbReference>
<dbReference type="PROSITE" id="PS00170">
    <property type="entry name" value="CSA_PPIASE_1"/>
    <property type="match status" value="1"/>
</dbReference>
<dbReference type="PROSITE" id="PS50072">
    <property type="entry name" value="CSA_PPIASE_2"/>
    <property type="match status" value="1"/>
</dbReference>
<proteinExistence type="inferred from homology"/>
<reference key="1">
    <citation type="journal article" date="2003" name="Nucleic Acids Res.">
        <title>What's in the genome of a filamentous fungus? Analysis of the Neurospora genome sequence.</title>
        <authorList>
            <person name="Mannhaupt G."/>
            <person name="Montrone C."/>
            <person name="Haase D."/>
            <person name="Mewes H.-W."/>
            <person name="Aign V."/>
            <person name="Hoheisel J.D."/>
            <person name="Fartmann B."/>
            <person name="Nyakatura G."/>
            <person name="Kempken F."/>
            <person name="Maier J."/>
            <person name="Schulte U."/>
        </authorList>
    </citation>
    <scope>NUCLEOTIDE SEQUENCE [LARGE SCALE GENOMIC DNA]</scope>
    <source>
        <strain>ATCC 24698 / 74-OR23-1A / CBS 708.71 / DSM 1257 / FGSC 987</strain>
    </source>
</reference>
<reference key="2">
    <citation type="journal article" date="2003" name="Nature">
        <title>The genome sequence of the filamentous fungus Neurospora crassa.</title>
        <authorList>
            <person name="Galagan J.E."/>
            <person name="Calvo S.E."/>
            <person name="Borkovich K.A."/>
            <person name="Selker E.U."/>
            <person name="Read N.D."/>
            <person name="Jaffe D.B."/>
            <person name="FitzHugh W."/>
            <person name="Ma L.-J."/>
            <person name="Smirnov S."/>
            <person name="Purcell S."/>
            <person name="Rehman B."/>
            <person name="Elkins T."/>
            <person name="Engels R."/>
            <person name="Wang S."/>
            <person name="Nielsen C.B."/>
            <person name="Butler J."/>
            <person name="Endrizzi M."/>
            <person name="Qui D."/>
            <person name="Ianakiev P."/>
            <person name="Bell-Pedersen D."/>
            <person name="Nelson M.A."/>
            <person name="Werner-Washburne M."/>
            <person name="Selitrennikoff C.P."/>
            <person name="Kinsey J.A."/>
            <person name="Braun E.L."/>
            <person name="Zelter A."/>
            <person name="Schulte U."/>
            <person name="Kothe G.O."/>
            <person name="Jedd G."/>
            <person name="Mewes H.-W."/>
            <person name="Staben C."/>
            <person name="Marcotte E."/>
            <person name="Greenberg D."/>
            <person name="Roy A."/>
            <person name="Foley K."/>
            <person name="Naylor J."/>
            <person name="Stange-Thomann N."/>
            <person name="Barrett R."/>
            <person name="Gnerre S."/>
            <person name="Kamal M."/>
            <person name="Kamvysselis M."/>
            <person name="Mauceli E.W."/>
            <person name="Bielke C."/>
            <person name="Rudd S."/>
            <person name="Frishman D."/>
            <person name="Krystofova S."/>
            <person name="Rasmussen C."/>
            <person name="Metzenberg R.L."/>
            <person name="Perkins D.D."/>
            <person name="Kroken S."/>
            <person name="Cogoni C."/>
            <person name="Macino G."/>
            <person name="Catcheside D.E.A."/>
            <person name="Li W."/>
            <person name="Pratt R.J."/>
            <person name="Osmani S.A."/>
            <person name="DeSouza C.P.C."/>
            <person name="Glass N.L."/>
            <person name="Orbach M.J."/>
            <person name="Berglund J.A."/>
            <person name="Voelker R."/>
            <person name="Yarden O."/>
            <person name="Plamann M."/>
            <person name="Seiler S."/>
            <person name="Dunlap J.C."/>
            <person name="Radford A."/>
            <person name="Aramayo R."/>
            <person name="Natvig D.O."/>
            <person name="Alex L.A."/>
            <person name="Mannhaupt G."/>
            <person name="Ebbole D.J."/>
            <person name="Freitag M."/>
            <person name="Paulsen I."/>
            <person name="Sachs M.S."/>
            <person name="Lander E.S."/>
            <person name="Nusbaum C."/>
            <person name="Birren B.W."/>
        </authorList>
    </citation>
    <scope>NUCLEOTIDE SEQUENCE [LARGE SCALE GENOMIC DNA]</scope>
    <source>
        <strain>ATCC 24698 / 74-OR23-1A / CBS 708.71 / DSM 1257 / FGSC 987</strain>
    </source>
</reference>
<sequence>MATDVAVETTMGTFTLELYTNHAPKTCKNFATLADRGYYDSTVFHRIIKDFMIQGGDPTGTGRGGSSIYGEKFEDEIHPGLKHTGAGVLSMANAGPNTNGSQFFITLAPTPWLDGKHTIFGRVKKGMGVIRRMGMVPTDKEDRPATEVKIVKARVVREEDMEA</sequence>
<organism>
    <name type="scientific">Neurospora crassa (strain ATCC 24698 / 74-OR23-1A / CBS 708.71 / DSM 1257 / FGSC 987)</name>
    <dbReference type="NCBI Taxonomy" id="367110"/>
    <lineage>
        <taxon>Eukaryota</taxon>
        <taxon>Fungi</taxon>
        <taxon>Dikarya</taxon>
        <taxon>Ascomycota</taxon>
        <taxon>Pezizomycotina</taxon>
        <taxon>Sordariomycetes</taxon>
        <taxon>Sordariomycetidae</taxon>
        <taxon>Sordariales</taxon>
        <taxon>Sordariaceae</taxon>
        <taxon>Neurospora</taxon>
    </lineage>
</organism>
<keyword id="KW-0413">Isomerase</keyword>
<keyword id="KW-1185">Reference proteome</keyword>
<keyword id="KW-0697">Rotamase</keyword>